<dbReference type="EC" id="3.6.1.62" evidence="2"/>
<dbReference type="EMBL" id="BC114872">
    <property type="protein sequence ID" value="AAI14873.1"/>
    <property type="molecule type" value="mRNA"/>
</dbReference>
<dbReference type="RefSeq" id="NP_001076852.1">
    <property type="nucleotide sequence ID" value="NM_001083383.2"/>
</dbReference>
<dbReference type="SMR" id="A4FUG7"/>
<dbReference type="FunCoup" id="A4FUG7">
    <property type="interactions" value="446"/>
</dbReference>
<dbReference type="STRING" id="9913.ENSBTAP00000028830"/>
<dbReference type="PaxDb" id="9913-ENSBTAP00000028830"/>
<dbReference type="GeneID" id="507315"/>
<dbReference type="KEGG" id="bta:507315"/>
<dbReference type="CTD" id="200035"/>
<dbReference type="VEuPathDB" id="HostDB:ENSBTAG00000021635"/>
<dbReference type="eggNOG" id="ENOG502QWT5">
    <property type="taxonomic scope" value="Eukaryota"/>
</dbReference>
<dbReference type="HOGENOM" id="CLU_061877_1_0_1"/>
<dbReference type="InParanoid" id="A4FUG7"/>
<dbReference type="OMA" id="AKEEWNM"/>
<dbReference type="OrthoDB" id="447842at2759"/>
<dbReference type="TreeFam" id="TF313611"/>
<dbReference type="Proteomes" id="UP000009136">
    <property type="component" value="Chromosome 3"/>
</dbReference>
<dbReference type="Bgee" id="ENSBTAG00000021635">
    <property type="expression patterns" value="Expressed in laryngeal cartilage and 107 other cell types or tissues"/>
</dbReference>
<dbReference type="GO" id="GO:0005777">
    <property type="term" value="C:peroxisome"/>
    <property type="evidence" value="ECO:0000318"/>
    <property type="project" value="GO_Central"/>
</dbReference>
<dbReference type="GO" id="GO:0046872">
    <property type="term" value="F:metal ion binding"/>
    <property type="evidence" value="ECO:0007669"/>
    <property type="project" value="UniProtKB-KW"/>
</dbReference>
<dbReference type="GO" id="GO:0035529">
    <property type="term" value="F:NADH pyrophosphatase activity"/>
    <property type="evidence" value="ECO:0000318"/>
    <property type="project" value="GO_Central"/>
</dbReference>
<dbReference type="GO" id="GO:0019677">
    <property type="term" value="P:NAD catabolic process"/>
    <property type="evidence" value="ECO:0000318"/>
    <property type="project" value="GO_Central"/>
</dbReference>
<dbReference type="GO" id="GO:0006734">
    <property type="term" value="P:NADH metabolic process"/>
    <property type="evidence" value="ECO:0000318"/>
    <property type="project" value="GO_Central"/>
</dbReference>
<dbReference type="GO" id="GO:0006742">
    <property type="term" value="P:NADP catabolic process"/>
    <property type="evidence" value="ECO:0000318"/>
    <property type="project" value="GO_Central"/>
</dbReference>
<dbReference type="CDD" id="cd04694">
    <property type="entry name" value="NUDIX_Nudt17"/>
    <property type="match status" value="1"/>
</dbReference>
<dbReference type="FunFam" id="3.90.79.10:FF:000033">
    <property type="entry name" value="nucleoside diphosphate-linked moiety X motif 17 isoform X1"/>
    <property type="match status" value="1"/>
</dbReference>
<dbReference type="Gene3D" id="3.90.79.10">
    <property type="entry name" value="Nucleoside Triphosphate Pyrophosphohydrolase"/>
    <property type="match status" value="1"/>
</dbReference>
<dbReference type="InterPro" id="IPR050241">
    <property type="entry name" value="NAD-cap_RNA_hydrolase_NudC"/>
</dbReference>
<dbReference type="InterPro" id="IPR015797">
    <property type="entry name" value="NUDIX_hydrolase-like_dom_sf"/>
</dbReference>
<dbReference type="InterPro" id="IPR000086">
    <property type="entry name" value="NUDIX_hydrolase_dom"/>
</dbReference>
<dbReference type="InterPro" id="IPR033716">
    <property type="entry name" value="Nudt17_dom"/>
</dbReference>
<dbReference type="PANTHER" id="PTHR42904:SF1">
    <property type="entry name" value="NUCLEOSIDE DIPHOSPHATE-LINKED MOIETY X MOTIF 17"/>
    <property type="match status" value="1"/>
</dbReference>
<dbReference type="PANTHER" id="PTHR42904">
    <property type="entry name" value="NUDIX HYDROLASE, NUDC SUBFAMILY"/>
    <property type="match status" value="1"/>
</dbReference>
<dbReference type="Pfam" id="PF00293">
    <property type="entry name" value="NUDIX"/>
    <property type="match status" value="1"/>
</dbReference>
<dbReference type="SUPFAM" id="SSF55811">
    <property type="entry name" value="Nudix"/>
    <property type="match status" value="1"/>
</dbReference>
<dbReference type="PROSITE" id="PS51462">
    <property type="entry name" value="NUDIX"/>
    <property type="match status" value="1"/>
</dbReference>
<organism>
    <name type="scientific">Bos taurus</name>
    <name type="common">Bovine</name>
    <dbReference type="NCBI Taxonomy" id="9913"/>
    <lineage>
        <taxon>Eukaryota</taxon>
        <taxon>Metazoa</taxon>
        <taxon>Chordata</taxon>
        <taxon>Craniata</taxon>
        <taxon>Vertebrata</taxon>
        <taxon>Euteleostomi</taxon>
        <taxon>Mammalia</taxon>
        <taxon>Eutheria</taxon>
        <taxon>Laurasiatheria</taxon>
        <taxon>Artiodactyla</taxon>
        <taxon>Ruminantia</taxon>
        <taxon>Pecora</taxon>
        <taxon>Bovidae</taxon>
        <taxon>Bovinae</taxon>
        <taxon>Bos</taxon>
    </lineage>
</organism>
<proteinExistence type="evidence at transcript level"/>
<keyword id="KW-0378">Hydrolase</keyword>
<keyword id="KW-0460">Magnesium</keyword>
<keyword id="KW-0464">Manganese</keyword>
<keyword id="KW-0479">Metal-binding</keyword>
<keyword id="KW-1185">Reference proteome</keyword>
<protein>
    <recommendedName>
        <fullName>m7GpppN-mRNA hydrolase NUDT17</fullName>
        <ecNumber evidence="2">3.6.1.62</ecNumber>
    </recommendedName>
    <alternativeName>
        <fullName>Nucleoside diphosphate-linked moiety X motif 17</fullName>
        <shortName>Nudix motif 17</shortName>
    </alternativeName>
</protein>
<evidence type="ECO:0000250" key="1"/>
<evidence type="ECO:0000250" key="2">
    <source>
        <dbReference type="UniProtKB" id="Q9CWD3"/>
    </source>
</evidence>
<evidence type="ECO:0000255" key="3">
    <source>
        <dbReference type="PROSITE-ProRule" id="PRU00794"/>
    </source>
</evidence>
<evidence type="ECO:0000305" key="4"/>
<name>NUD17_BOVIN</name>
<gene>
    <name type="primary">NUDT17</name>
</gene>
<accession>A4FUG7</accession>
<sequence>MAAARVLLLLSGRPESVSFAQSVCGLLGAGSGLGPWPTHCGLKRGQLVLSDKPFPGASARLPLQRPPFCPFAALDQQPRAPGVELPPKGRGVDLGVAVILQSSDQTVLLTRRTSTLNISPNLWVPPGGHVEPDEELLDGGLRELWEESGLQLPQGQFSWVPLGLWESAYPPKLSWGLPKYHHIVLYLLVISQESQQQLQARIQPNAGEVSAFMWLGPDIAAAVAATEDGTETPKHLPQDLPSSVPTVELKENGGAQPLALPTSTLLRTTPGTADSRERVSTGTKFALTLWLQHLGRKSRDGS</sequence>
<comment type="function">
    <text evidence="2">Acts as a decapping enzyme capable of hydrolyzing monomethylated capped RNAs (in vitro). Hydrolyzes monomethylated capped RNA after alpha and beta phosphates to form N(7)-methyl-GDP. Shows low activity towards unmethylated capped RNA.</text>
</comment>
<comment type="catalytic activity">
    <reaction evidence="2">
        <text>a 5'-end (N(7)-methyl 5'-triphosphoguanosine)-ribonucleoside in mRNA + H2O = N(7)-methyl-GDP + a 5'-end phospho-ribonucleoside in mRNA + 2 H(+)</text>
        <dbReference type="Rhea" id="RHEA:67484"/>
        <dbReference type="Rhea" id="RHEA-COMP:15692"/>
        <dbReference type="Rhea" id="RHEA-COMP:17167"/>
        <dbReference type="ChEBI" id="CHEBI:15377"/>
        <dbReference type="ChEBI" id="CHEBI:15378"/>
        <dbReference type="ChEBI" id="CHEBI:63714"/>
        <dbReference type="ChEBI" id="CHEBI:138282"/>
        <dbReference type="ChEBI" id="CHEBI:156461"/>
        <dbReference type="EC" id="3.6.1.62"/>
    </reaction>
</comment>
<comment type="cofactor">
    <cofactor evidence="1">
        <name>Mg(2+)</name>
        <dbReference type="ChEBI" id="CHEBI:18420"/>
    </cofactor>
    <cofactor evidence="1">
        <name>Mn(2+)</name>
        <dbReference type="ChEBI" id="CHEBI:29035"/>
    </cofactor>
</comment>
<comment type="similarity">
    <text evidence="4">Belongs to the Nudix hydrolase family.</text>
</comment>
<reference key="1">
    <citation type="submission" date="2006-04" db="EMBL/GenBank/DDBJ databases">
        <authorList>
            <consortium name="NIH - Mammalian Gene Collection (MGC) project"/>
        </authorList>
    </citation>
    <scope>NUCLEOTIDE SEQUENCE [LARGE SCALE MRNA]</scope>
    <source>
        <strain>Hereford</strain>
        <tissue>Thymus</tissue>
    </source>
</reference>
<feature type="chain" id="PRO_0000380516" description="m7GpppN-mRNA hydrolase NUDT17">
    <location>
        <begin position="1"/>
        <end position="302"/>
    </location>
</feature>
<feature type="domain" description="Nudix hydrolase" evidence="3">
    <location>
        <begin position="89"/>
        <end position="237"/>
    </location>
</feature>
<feature type="short sequence motif" description="Nudix box">
    <location>
        <begin position="128"/>
        <end position="149"/>
    </location>
</feature>
<feature type="binding site" evidence="1">
    <location>
        <position position="143"/>
    </location>
    <ligand>
        <name>Mg(2+)</name>
        <dbReference type="ChEBI" id="CHEBI:18420"/>
    </ligand>
</feature>
<feature type="binding site" evidence="1">
    <location>
        <position position="147"/>
    </location>
    <ligand>
        <name>Mg(2+)</name>
        <dbReference type="ChEBI" id="CHEBI:18420"/>
    </ligand>
</feature>